<protein>
    <recommendedName>
        <fullName>Uncharacterized mitochondrial membrane protein FMP10</fullName>
    </recommendedName>
</protein>
<comment type="subcellular location">
    <subcellularLocation>
        <location evidence="3">Mitochondrion membrane</location>
        <topology evidence="3">Multi-pass membrane protein</topology>
    </subcellularLocation>
</comment>
<comment type="miscellaneous">
    <text evidence="2">Present with 1920 molecules/cell in log phase SD medium.</text>
</comment>
<comment type="similarity">
    <text evidence="3">Belongs to the FMP10 family.</text>
</comment>
<dbReference type="EMBL" id="U18922">
    <property type="protein sequence ID" value="AAB64709.1"/>
    <property type="molecule type" value="Genomic_DNA"/>
</dbReference>
<dbReference type="EMBL" id="BK006939">
    <property type="protein sequence ID" value="DAA07845.1"/>
    <property type="molecule type" value="Genomic_DNA"/>
</dbReference>
<dbReference type="PIR" id="S50685">
    <property type="entry name" value="S50685"/>
</dbReference>
<dbReference type="RefSeq" id="NP_011109.3">
    <property type="nucleotide sequence ID" value="NM_001179072.3"/>
</dbReference>
<dbReference type="SMR" id="P40098"/>
<dbReference type="BioGRID" id="36936">
    <property type="interactions" value="197"/>
</dbReference>
<dbReference type="DIP" id="DIP-6536N"/>
<dbReference type="FunCoup" id="P40098">
    <property type="interactions" value="109"/>
</dbReference>
<dbReference type="IntAct" id="P40098">
    <property type="interactions" value="7"/>
</dbReference>
<dbReference type="STRING" id="4932.YER182W"/>
<dbReference type="PaxDb" id="4932-YER182W"/>
<dbReference type="PeptideAtlas" id="P40098"/>
<dbReference type="EnsemblFungi" id="YER182W_mRNA">
    <property type="protein sequence ID" value="YER182W"/>
    <property type="gene ID" value="YER182W"/>
</dbReference>
<dbReference type="GeneID" id="856931"/>
<dbReference type="KEGG" id="sce:YER182W"/>
<dbReference type="AGR" id="SGD:S000000984"/>
<dbReference type="SGD" id="S000000984">
    <property type="gene designation" value="FMP10"/>
</dbReference>
<dbReference type="VEuPathDB" id="FungiDB:YER182W"/>
<dbReference type="eggNOG" id="KOG4781">
    <property type="taxonomic scope" value="Eukaryota"/>
</dbReference>
<dbReference type="HOGENOM" id="CLU_052827_1_1_1"/>
<dbReference type="InParanoid" id="P40098"/>
<dbReference type="OMA" id="IYHLGMK"/>
<dbReference type="OrthoDB" id="506431at2759"/>
<dbReference type="BioCyc" id="YEAST:G3O-30339-MONOMER"/>
<dbReference type="BioGRID-ORCS" id="856931">
    <property type="hits" value="2 hits in 10 CRISPR screens"/>
</dbReference>
<dbReference type="PRO" id="PR:P40098"/>
<dbReference type="Proteomes" id="UP000002311">
    <property type="component" value="Chromosome V"/>
</dbReference>
<dbReference type="RNAct" id="P40098">
    <property type="molecule type" value="protein"/>
</dbReference>
<dbReference type="GO" id="GO:0031966">
    <property type="term" value="C:mitochondrial membrane"/>
    <property type="evidence" value="ECO:0007669"/>
    <property type="project" value="UniProtKB-SubCell"/>
</dbReference>
<dbReference type="GO" id="GO:0005739">
    <property type="term" value="C:mitochondrion"/>
    <property type="evidence" value="ECO:0007005"/>
    <property type="project" value="SGD"/>
</dbReference>
<dbReference type="FunFam" id="3.10.129.10:FF:000098">
    <property type="entry name" value="YER182W-like protein"/>
    <property type="match status" value="1"/>
</dbReference>
<dbReference type="Gene3D" id="3.10.129.10">
    <property type="entry name" value="Hotdog Thioesterase"/>
    <property type="match status" value="1"/>
</dbReference>
<dbReference type="InterPro" id="IPR029069">
    <property type="entry name" value="HotDog_dom_sf"/>
</dbReference>
<dbReference type="InterPro" id="IPR052061">
    <property type="entry name" value="PTE-AB_protein"/>
</dbReference>
<dbReference type="PANTHER" id="PTHR47260">
    <property type="entry name" value="UPF0644 PROTEIN PB2B4.06"/>
    <property type="match status" value="1"/>
</dbReference>
<dbReference type="PANTHER" id="PTHR47260:SF1">
    <property type="entry name" value="UPF0644 PROTEIN PB2B4.06"/>
    <property type="match status" value="1"/>
</dbReference>
<dbReference type="SUPFAM" id="SSF54637">
    <property type="entry name" value="Thioesterase/thiol ester dehydrase-isomerase"/>
    <property type="match status" value="1"/>
</dbReference>
<organism>
    <name type="scientific">Saccharomyces cerevisiae (strain ATCC 204508 / S288c)</name>
    <name type="common">Baker's yeast</name>
    <dbReference type="NCBI Taxonomy" id="559292"/>
    <lineage>
        <taxon>Eukaryota</taxon>
        <taxon>Fungi</taxon>
        <taxon>Dikarya</taxon>
        <taxon>Ascomycota</taxon>
        <taxon>Saccharomycotina</taxon>
        <taxon>Saccharomycetes</taxon>
        <taxon>Saccharomycetales</taxon>
        <taxon>Saccharomycetaceae</taxon>
        <taxon>Saccharomyces</taxon>
    </lineage>
</organism>
<name>FMP10_YEAST</name>
<evidence type="ECO:0000255" key="1"/>
<evidence type="ECO:0000269" key="2">
    <source>
    </source>
</evidence>
<evidence type="ECO:0000305" key="3"/>
<gene>
    <name type="primary">FMP10</name>
    <name type="ordered locus">YER182W</name>
</gene>
<sequence>MFKRIAIAQIRTYTNGVVFKTASKPKRRWIPWTIFGGSFLGGWYLTQHMTFTDLLAYWRYDALPKNADEVVKYHADLNRRLNGLPIVKQLENAGFVQVIANEEENLLVSRALNTPGGVAIPPRVYYNPSRRETVGLYHLGMKLTGYPFLIHGGILATVIEDLMKEAIRLEKGTKNINQETKNLSISYKFPTLANQFVVVRTTDLQQYGNKTKLKAELMDQSGNRTLVKANATFSSEQGNPKEEK</sequence>
<reference key="1">
    <citation type="journal article" date="1997" name="Nature">
        <title>The nucleotide sequence of Saccharomyces cerevisiae chromosome V.</title>
        <authorList>
            <person name="Dietrich F.S."/>
            <person name="Mulligan J.T."/>
            <person name="Hennessy K.M."/>
            <person name="Yelton M.A."/>
            <person name="Allen E."/>
            <person name="Araujo R."/>
            <person name="Aviles E."/>
            <person name="Berno A."/>
            <person name="Brennan T."/>
            <person name="Carpenter J."/>
            <person name="Chen E."/>
            <person name="Cherry J.M."/>
            <person name="Chung E."/>
            <person name="Duncan M."/>
            <person name="Guzman E."/>
            <person name="Hartzell G."/>
            <person name="Hunicke-Smith S."/>
            <person name="Hyman R.W."/>
            <person name="Kayser A."/>
            <person name="Komp C."/>
            <person name="Lashkari D."/>
            <person name="Lew H."/>
            <person name="Lin D."/>
            <person name="Mosedale D."/>
            <person name="Nakahara K."/>
            <person name="Namath A."/>
            <person name="Norgren R."/>
            <person name="Oefner P."/>
            <person name="Oh C."/>
            <person name="Petel F.X."/>
            <person name="Roberts D."/>
            <person name="Sehl P."/>
            <person name="Schramm S."/>
            <person name="Shogren T."/>
            <person name="Smith V."/>
            <person name="Taylor P."/>
            <person name="Wei Y."/>
            <person name="Botstein D."/>
            <person name="Davis R.W."/>
        </authorList>
    </citation>
    <scope>NUCLEOTIDE SEQUENCE [LARGE SCALE GENOMIC DNA]</scope>
    <source>
        <strain>ATCC 204508 / S288c</strain>
    </source>
</reference>
<reference key="2">
    <citation type="journal article" date="2014" name="G3 (Bethesda)">
        <title>The reference genome sequence of Saccharomyces cerevisiae: Then and now.</title>
        <authorList>
            <person name="Engel S.R."/>
            <person name="Dietrich F.S."/>
            <person name="Fisk D.G."/>
            <person name="Binkley G."/>
            <person name="Balakrishnan R."/>
            <person name="Costanzo M.C."/>
            <person name="Dwight S.S."/>
            <person name="Hitz B.C."/>
            <person name="Karra K."/>
            <person name="Nash R.S."/>
            <person name="Weng S."/>
            <person name="Wong E.D."/>
            <person name="Lloyd P."/>
            <person name="Skrzypek M.S."/>
            <person name="Miyasato S.R."/>
            <person name="Simison M."/>
            <person name="Cherry J.M."/>
        </authorList>
    </citation>
    <scope>GENOME REANNOTATION</scope>
    <source>
        <strain>ATCC 204508 / S288c</strain>
    </source>
</reference>
<reference key="3">
    <citation type="journal article" date="2003" name="Nature">
        <title>Global analysis of protein localization in budding yeast.</title>
        <authorList>
            <person name="Huh W.-K."/>
            <person name="Falvo J.V."/>
            <person name="Gerke L.C."/>
            <person name="Carroll A.S."/>
            <person name="Howson R.W."/>
            <person name="Weissman J.S."/>
            <person name="O'Shea E.K."/>
        </authorList>
    </citation>
    <scope>SUBCELLULAR LOCATION [LARGE SCALE ANALYSIS]</scope>
</reference>
<reference key="4">
    <citation type="journal article" date="2003" name="Nature">
        <title>Global analysis of protein expression in yeast.</title>
        <authorList>
            <person name="Ghaemmaghami S."/>
            <person name="Huh W.-K."/>
            <person name="Bower K."/>
            <person name="Howson R.W."/>
            <person name="Belle A."/>
            <person name="Dephoure N."/>
            <person name="O'Shea E.K."/>
            <person name="Weissman J.S."/>
        </authorList>
    </citation>
    <scope>LEVEL OF PROTEIN EXPRESSION [LARGE SCALE ANALYSIS]</scope>
</reference>
<reference key="5">
    <citation type="journal article" date="2003" name="Proc. Natl. Acad. Sci. U.S.A.">
        <title>The proteome of Saccharomyces cerevisiae mitochondria.</title>
        <authorList>
            <person name="Sickmann A."/>
            <person name="Reinders J."/>
            <person name="Wagner Y."/>
            <person name="Joppich C."/>
            <person name="Zahedi R.P."/>
            <person name="Meyer H.E."/>
            <person name="Schoenfisch B."/>
            <person name="Perschil I."/>
            <person name="Chacinska A."/>
            <person name="Guiard B."/>
            <person name="Rehling P."/>
            <person name="Pfanner N."/>
            <person name="Meisinger C."/>
        </authorList>
    </citation>
    <scope>SUBCELLULAR LOCATION [LARGE SCALE ANALYSIS]</scope>
    <source>
        <strain>ATCC 76625 / YPH499</strain>
    </source>
</reference>
<proteinExistence type="evidence at protein level"/>
<keyword id="KW-0472">Membrane</keyword>
<keyword id="KW-0496">Mitochondrion</keyword>
<keyword id="KW-1185">Reference proteome</keyword>
<keyword id="KW-0812">Transmembrane</keyword>
<keyword id="KW-1133">Transmembrane helix</keyword>
<accession>P40098</accession>
<accession>D3DM91</accession>
<feature type="chain" id="PRO_0000202660" description="Uncharacterized mitochondrial membrane protein FMP10">
    <location>
        <begin position="1"/>
        <end position="244"/>
    </location>
</feature>
<feature type="transmembrane region" description="Helical" evidence="1">
    <location>
        <begin position="29"/>
        <end position="49"/>
    </location>
</feature>
<feature type="transmembrane region" description="Helical" evidence="1">
    <location>
        <begin position="139"/>
        <end position="159"/>
    </location>
</feature>